<protein>
    <recommendedName>
        <fullName evidence="1">Protein translocase subunit SecA</fullName>
        <ecNumber evidence="1">7.4.2.8</ecNumber>
    </recommendedName>
</protein>
<gene>
    <name evidence="1" type="primary">secA</name>
    <name type="ordered locus">Cthe_1385</name>
</gene>
<name>SECA_ACET2</name>
<dbReference type="EC" id="7.4.2.8" evidence="1"/>
<dbReference type="EMBL" id="CP000568">
    <property type="protein sequence ID" value="ABN52617.1"/>
    <property type="molecule type" value="Genomic_DNA"/>
</dbReference>
<dbReference type="RefSeq" id="WP_003518239.1">
    <property type="nucleotide sequence ID" value="NC_009012.1"/>
</dbReference>
<dbReference type="SMR" id="A3DF88"/>
<dbReference type="STRING" id="203119.Cthe_1385"/>
<dbReference type="GeneID" id="35805711"/>
<dbReference type="KEGG" id="cth:Cthe_1385"/>
<dbReference type="eggNOG" id="COG0653">
    <property type="taxonomic scope" value="Bacteria"/>
</dbReference>
<dbReference type="HOGENOM" id="CLU_005314_3_0_9"/>
<dbReference type="OrthoDB" id="9805579at2"/>
<dbReference type="Proteomes" id="UP000002145">
    <property type="component" value="Chromosome"/>
</dbReference>
<dbReference type="GO" id="GO:0031522">
    <property type="term" value="C:cell envelope Sec protein transport complex"/>
    <property type="evidence" value="ECO:0007669"/>
    <property type="project" value="TreeGrafter"/>
</dbReference>
<dbReference type="GO" id="GO:0005829">
    <property type="term" value="C:cytosol"/>
    <property type="evidence" value="ECO:0007669"/>
    <property type="project" value="TreeGrafter"/>
</dbReference>
<dbReference type="GO" id="GO:0005886">
    <property type="term" value="C:plasma membrane"/>
    <property type="evidence" value="ECO:0007669"/>
    <property type="project" value="UniProtKB-SubCell"/>
</dbReference>
<dbReference type="GO" id="GO:0005524">
    <property type="term" value="F:ATP binding"/>
    <property type="evidence" value="ECO:0007669"/>
    <property type="project" value="UniProtKB-UniRule"/>
</dbReference>
<dbReference type="GO" id="GO:0046872">
    <property type="term" value="F:metal ion binding"/>
    <property type="evidence" value="ECO:0007669"/>
    <property type="project" value="UniProtKB-KW"/>
</dbReference>
<dbReference type="GO" id="GO:0008564">
    <property type="term" value="F:protein-exporting ATPase activity"/>
    <property type="evidence" value="ECO:0007669"/>
    <property type="project" value="UniProtKB-EC"/>
</dbReference>
<dbReference type="GO" id="GO:0065002">
    <property type="term" value="P:intracellular protein transmembrane transport"/>
    <property type="evidence" value="ECO:0007669"/>
    <property type="project" value="UniProtKB-UniRule"/>
</dbReference>
<dbReference type="GO" id="GO:0017038">
    <property type="term" value="P:protein import"/>
    <property type="evidence" value="ECO:0007669"/>
    <property type="project" value="InterPro"/>
</dbReference>
<dbReference type="GO" id="GO:0006605">
    <property type="term" value="P:protein targeting"/>
    <property type="evidence" value="ECO:0007669"/>
    <property type="project" value="UniProtKB-UniRule"/>
</dbReference>
<dbReference type="GO" id="GO:0043952">
    <property type="term" value="P:protein transport by the Sec complex"/>
    <property type="evidence" value="ECO:0007669"/>
    <property type="project" value="TreeGrafter"/>
</dbReference>
<dbReference type="CDD" id="cd17928">
    <property type="entry name" value="DEXDc_SecA"/>
    <property type="match status" value="1"/>
</dbReference>
<dbReference type="CDD" id="cd18803">
    <property type="entry name" value="SF2_C_secA"/>
    <property type="match status" value="1"/>
</dbReference>
<dbReference type="FunFam" id="3.40.50.300:FF:000081">
    <property type="entry name" value="Preprotein translocase subunit SecA"/>
    <property type="match status" value="1"/>
</dbReference>
<dbReference type="FunFam" id="3.40.50.300:FF:000113">
    <property type="entry name" value="Preprotein translocase subunit SecA"/>
    <property type="match status" value="1"/>
</dbReference>
<dbReference type="FunFam" id="3.90.1440.10:FF:000001">
    <property type="entry name" value="Preprotein translocase subunit SecA"/>
    <property type="match status" value="1"/>
</dbReference>
<dbReference type="FunFam" id="1.10.3060.10:FF:000003">
    <property type="entry name" value="Protein translocase subunit SecA"/>
    <property type="match status" value="1"/>
</dbReference>
<dbReference type="Gene3D" id="1.10.3060.10">
    <property type="entry name" value="Helical scaffold and wing domains of SecA"/>
    <property type="match status" value="1"/>
</dbReference>
<dbReference type="Gene3D" id="3.40.50.300">
    <property type="entry name" value="P-loop containing nucleotide triphosphate hydrolases"/>
    <property type="match status" value="2"/>
</dbReference>
<dbReference type="Gene3D" id="3.90.1440.10">
    <property type="entry name" value="SecA, preprotein cross-linking domain"/>
    <property type="match status" value="1"/>
</dbReference>
<dbReference type="HAMAP" id="MF_01382">
    <property type="entry name" value="SecA"/>
    <property type="match status" value="1"/>
</dbReference>
<dbReference type="InterPro" id="IPR014001">
    <property type="entry name" value="Helicase_ATP-bd"/>
</dbReference>
<dbReference type="InterPro" id="IPR027417">
    <property type="entry name" value="P-loop_NTPase"/>
</dbReference>
<dbReference type="InterPro" id="IPR004027">
    <property type="entry name" value="SEC_C_motif"/>
</dbReference>
<dbReference type="InterPro" id="IPR000185">
    <property type="entry name" value="SecA"/>
</dbReference>
<dbReference type="InterPro" id="IPR020937">
    <property type="entry name" value="SecA_CS"/>
</dbReference>
<dbReference type="InterPro" id="IPR011115">
    <property type="entry name" value="SecA_DEAD"/>
</dbReference>
<dbReference type="InterPro" id="IPR014018">
    <property type="entry name" value="SecA_motor_DEAD"/>
</dbReference>
<dbReference type="InterPro" id="IPR011130">
    <property type="entry name" value="SecA_preprotein_X-link_dom"/>
</dbReference>
<dbReference type="InterPro" id="IPR044722">
    <property type="entry name" value="SecA_SF2_C"/>
</dbReference>
<dbReference type="InterPro" id="IPR011116">
    <property type="entry name" value="SecA_Wing/Scaffold"/>
</dbReference>
<dbReference type="InterPro" id="IPR036266">
    <property type="entry name" value="SecA_Wing/Scaffold_sf"/>
</dbReference>
<dbReference type="InterPro" id="IPR036670">
    <property type="entry name" value="SecA_X-link_sf"/>
</dbReference>
<dbReference type="NCBIfam" id="NF009538">
    <property type="entry name" value="PRK12904.1"/>
    <property type="match status" value="1"/>
</dbReference>
<dbReference type="NCBIfam" id="TIGR00963">
    <property type="entry name" value="secA"/>
    <property type="match status" value="1"/>
</dbReference>
<dbReference type="PANTHER" id="PTHR30612:SF0">
    <property type="entry name" value="CHLOROPLAST PROTEIN-TRANSPORTING ATPASE"/>
    <property type="match status" value="1"/>
</dbReference>
<dbReference type="PANTHER" id="PTHR30612">
    <property type="entry name" value="SECA INNER MEMBRANE COMPONENT OF SEC PROTEIN SECRETION SYSTEM"/>
    <property type="match status" value="1"/>
</dbReference>
<dbReference type="Pfam" id="PF21090">
    <property type="entry name" value="P-loop_SecA"/>
    <property type="match status" value="1"/>
</dbReference>
<dbReference type="Pfam" id="PF02810">
    <property type="entry name" value="SEC-C"/>
    <property type="match status" value="1"/>
</dbReference>
<dbReference type="Pfam" id="PF07517">
    <property type="entry name" value="SecA_DEAD"/>
    <property type="match status" value="1"/>
</dbReference>
<dbReference type="Pfam" id="PF01043">
    <property type="entry name" value="SecA_PP_bind"/>
    <property type="match status" value="1"/>
</dbReference>
<dbReference type="Pfam" id="PF07516">
    <property type="entry name" value="SecA_SW"/>
    <property type="match status" value="1"/>
</dbReference>
<dbReference type="PRINTS" id="PR00906">
    <property type="entry name" value="SECA"/>
</dbReference>
<dbReference type="SMART" id="SM00957">
    <property type="entry name" value="SecA_DEAD"/>
    <property type="match status" value="1"/>
</dbReference>
<dbReference type="SMART" id="SM00958">
    <property type="entry name" value="SecA_PP_bind"/>
    <property type="match status" value="1"/>
</dbReference>
<dbReference type="SUPFAM" id="SSF81886">
    <property type="entry name" value="Helical scaffold and wing domains of SecA"/>
    <property type="match status" value="1"/>
</dbReference>
<dbReference type="SUPFAM" id="SSF52540">
    <property type="entry name" value="P-loop containing nucleoside triphosphate hydrolases"/>
    <property type="match status" value="2"/>
</dbReference>
<dbReference type="SUPFAM" id="SSF81767">
    <property type="entry name" value="Pre-protein crosslinking domain of SecA"/>
    <property type="match status" value="1"/>
</dbReference>
<dbReference type="PROSITE" id="PS01312">
    <property type="entry name" value="SECA"/>
    <property type="match status" value="1"/>
</dbReference>
<dbReference type="PROSITE" id="PS51196">
    <property type="entry name" value="SECA_MOTOR_DEAD"/>
    <property type="match status" value="1"/>
</dbReference>
<proteinExistence type="inferred from homology"/>
<accession>A3DF88</accession>
<keyword id="KW-0067">ATP-binding</keyword>
<keyword id="KW-1003">Cell membrane</keyword>
<keyword id="KW-0963">Cytoplasm</keyword>
<keyword id="KW-0472">Membrane</keyword>
<keyword id="KW-0479">Metal-binding</keyword>
<keyword id="KW-0547">Nucleotide-binding</keyword>
<keyword id="KW-0653">Protein transport</keyword>
<keyword id="KW-1185">Reference proteome</keyword>
<keyword id="KW-1278">Translocase</keyword>
<keyword id="KW-0811">Translocation</keyword>
<keyword id="KW-0813">Transport</keyword>
<keyword id="KW-0862">Zinc</keyword>
<sequence length="910" mass="104612">MLKVFEKIFGSYSDREVKRIKPIIDRIEALEPEMQALSDEQLKAKTPEFKRRLSQGETLDDLLPEAFAVVREASRRVLGMRHFRVQLIGGVVLHQGRIAEMKTGEGKTLVATLPVYLNALEGKGVHVVTVNDYLATRDSEWMGKLYNFLGLSVGLIVHGLTNEERKKAYSCDITYGTNNEFGFDYLRDNMVIYKEDMVQRDLHFAIVDEVDSILIDEARTPLIISGVGDKSTDLYTRADAFVRRLKVKVFTELDDKEQTDDIEADYIVDEKANTATLTASGVKKAEEFFGIQNLSDPDNMTISHHINQALRAHGLMKRDRDYVVKDDQVIIVDEFTGRLMYGRRYSNGLHQAIEAKEGVKVERESKTLASITFQNYFRMYRKLSGMTGTAQTEEQEFRSIYNLDVVVIPTNMPVIRVDHPDSVYKNERGKFNAVINQVIECHKKGQPVLIGTISIEKSELLSSMLKRHGIPHQVLNAKYHEKEAEIIAQAGKLGAVTIATNMAGRGTDILLGGNPEFMAKQEMRKRGFREDVINQATGFNDTNDPEILEARKVYRELYEGFKKITDAEREKVVAAGGLFIIGTERHESRRIDNQLRGRAGRQGDPGESRFYISLEDDLMRLFGSDRLMGMVEALGLEEDQPIEHKMLSNAIENAQKRVESRNFAIRKSVLEYDDVMNKQREVIYAQRRKVLNGENLKENIVKMMENIADYIVNLFCSENPHPDFWDWEGIRSYTEKAYVPEGTLDFSKEQMEDLNKEKLRQIILDSMLKRYEEKEKEFGSELMRELERVVLLRVVDQKWMDHIDDMDQLQHGVRLRAYGHKDPVIEYKFESFEMFEEMNRNIQSDVVRIILNTHIDRNRMPQRQKVAEPVTASHGEEVRKPVVKRNKVGRNELCPCGSGKKYKKCCGIDE</sequence>
<comment type="function">
    <text evidence="1">Part of the Sec protein translocase complex. Interacts with the SecYEG preprotein conducting channel. Has a central role in coupling the hydrolysis of ATP to the transfer of proteins into and across the cell membrane, serving as an ATP-driven molecular motor driving the stepwise translocation of polypeptide chains across the membrane.</text>
</comment>
<comment type="catalytic activity">
    <reaction evidence="1">
        <text>ATP + H2O + cellular proteinSide 1 = ADP + phosphate + cellular proteinSide 2.</text>
        <dbReference type="EC" id="7.4.2.8"/>
    </reaction>
</comment>
<comment type="cofactor">
    <cofactor evidence="1">
        <name>Zn(2+)</name>
        <dbReference type="ChEBI" id="CHEBI:29105"/>
    </cofactor>
    <text evidence="1">May bind 1 zinc ion per subunit.</text>
</comment>
<comment type="subunit">
    <text evidence="1">Monomer and homodimer. Part of the essential Sec protein translocation apparatus which comprises SecA, SecYEG and auxiliary proteins SecDF. Other proteins may also be involved.</text>
</comment>
<comment type="subcellular location">
    <subcellularLocation>
        <location evidence="1">Cell membrane</location>
        <topology evidence="1">Peripheral membrane protein</topology>
        <orientation evidence="1">Cytoplasmic side</orientation>
    </subcellularLocation>
    <subcellularLocation>
        <location evidence="1">Cytoplasm</location>
    </subcellularLocation>
    <text evidence="1">Distribution is 50-50.</text>
</comment>
<comment type="similarity">
    <text evidence="1">Belongs to the SecA family.</text>
</comment>
<reference key="1">
    <citation type="submission" date="2007-02" db="EMBL/GenBank/DDBJ databases">
        <title>Complete sequence of Clostridium thermocellum ATCC 27405.</title>
        <authorList>
            <consortium name="US DOE Joint Genome Institute"/>
            <person name="Copeland A."/>
            <person name="Lucas S."/>
            <person name="Lapidus A."/>
            <person name="Barry K."/>
            <person name="Detter J.C."/>
            <person name="Glavina del Rio T."/>
            <person name="Hammon N."/>
            <person name="Israni S."/>
            <person name="Dalin E."/>
            <person name="Tice H."/>
            <person name="Pitluck S."/>
            <person name="Chertkov O."/>
            <person name="Brettin T."/>
            <person name="Bruce D."/>
            <person name="Han C."/>
            <person name="Tapia R."/>
            <person name="Gilna P."/>
            <person name="Schmutz J."/>
            <person name="Larimer F."/>
            <person name="Land M."/>
            <person name="Hauser L."/>
            <person name="Kyrpides N."/>
            <person name="Mikhailova N."/>
            <person name="Wu J.H.D."/>
            <person name="Newcomb M."/>
            <person name="Richardson P."/>
        </authorList>
    </citation>
    <scope>NUCLEOTIDE SEQUENCE [LARGE SCALE GENOMIC DNA]</scope>
    <source>
        <strain>ATCC 27405 / DSM 1237 / JCM 9322 / NBRC 103400 / NCIMB 10682 / NRRL B-4536 / VPI 7372</strain>
    </source>
</reference>
<evidence type="ECO:0000255" key="1">
    <source>
        <dbReference type="HAMAP-Rule" id="MF_01382"/>
    </source>
</evidence>
<feature type="chain" id="PRO_0000318336" description="Protein translocase subunit SecA">
    <location>
        <begin position="1"/>
        <end position="910"/>
    </location>
</feature>
<feature type="binding site" evidence="1">
    <location>
        <position position="86"/>
    </location>
    <ligand>
        <name>ATP</name>
        <dbReference type="ChEBI" id="CHEBI:30616"/>
    </ligand>
</feature>
<feature type="binding site" evidence="1">
    <location>
        <begin position="104"/>
        <end position="108"/>
    </location>
    <ligand>
        <name>ATP</name>
        <dbReference type="ChEBI" id="CHEBI:30616"/>
    </ligand>
</feature>
<feature type="binding site" evidence="1">
    <location>
        <position position="508"/>
    </location>
    <ligand>
        <name>ATP</name>
        <dbReference type="ChEBI" id="CHEBI:30616"/>
    </ligand>
</feature>
<feature type="binding site" evidence="1">
    <location>
        <position position="894"/>
    </location>
    <ligand>
        <name>Zn(2+)</name>
        <dbReference type="ChEBI" id="CHEBI:29105"/>
    </ligand>
</feature>
<feature type="binding site" evidence="1">
    <location>
        <position position="896"/>
    </location>
    <ligand>
        <name>Zn(2+)</name>
        <dbReference type="ChEBI" id="CHEBI:29105"/>
    </ligand>
</feature>
<feature type="binding site" evidence="1">
    <location>
        <position position="905"/>
    </location>
    <ligand>
        <name>Zn(2+)</name>
        <dbReference type="ChEBI" id="CHEBI:29105"/>
    </ligand>
</feature>
<feature type="binding site" evidence="1">
    <location>
        <position position="906"/>
    </location>
    <ligand>
        <name>Zn(2+)</name>
        <dbReference type="ChEBI" id="CHEBI:29105"/>
    </ligand>
</feature>
<organism>
    <name type="scientific">Acetivibrio thermocellus (strain ATCC 27405 / DSM 1237 / JCM 9322 / NBRC 103400 / NCIMB 10682 / NRRL B-4536 / VPI 7372)</name>
    <name type="common">Clostridium thermocellum</name>
    <dbReference type="NCBI Taxonomy" id="203119"/>
    <lineage>
        <taxon>Bacteria</taxon>
        <taxon>Bacillati</taxon>
        <taxon>Bacillota</taxon>
        <taxon>Clostridia</taxon>
        <taxon>Eubacteriales</taxon>
        <taxon>Oscillospiraceae</taxon>
        <taxon>Acetivibrio</taxon>
    </lineage>
</organism>